<evidence type="ECO:0000250" key="1">
    <source>
        <dbReference type="UniProtKB" id="P32004"/>
    </source>
</evidence>
<evidence type="ECO:0000250" key="2">
    <source>
        <dbReference type="UniProtKB" id="Q05695"/>
    </source>
</evidence>
<evidence type="ECO:0000255" key="3"/>
<evidence type="ECO:0000255" key="4">
    <source>
        <dbReference type="PROSITE-ProRule" id="PRU00114"/>
    </source>
</evidence>
<evidence type="ECO:0000255" key="5">
    <source>
        <dbReference type="PROSITE-ProRule" id="PRU00316"/>
    </source>
</evidence>
<evidence type="ECO:0000256" key="6">
    <source>
        <dbReference type="SAM" id="MobiDB-lite"/>
    </source>
</evidence>
<evidence type="ECO:0000269" key="7">
    <source>
    </source>
</evidence>
<evidence type="ECO:0000269" key="8">
    <source>
    </source>
</evidence>
<evidence type="ECO:0000269" key="9">
    <source>
    </source>
</evidence>
<evidence type="ECO:0000305" key="10"/>
<evidence type="ECO:0007744" key="11">
    <source>
    </source>
</evidence>
<sequence length="1260" mass="140969">MVVMLRYVWPLLLCSPCLLIQIPDEYKGHHVLEPPVITEQSPRRLVVFPTDDISLKCEARGRPQVEFRWTKDGIHFKPKEELGVVVHEAPYSGSFTIEGNNSFAQRFQGIYRCYASNKLGTAMSHEIQLVAEGAPKWPKETVKPVEVEEGESVVLPCNPPPSAAPPRIYWMNSKIFDIKQDERVSMGQNGDLYFANVLTSDNHSDYICNAHFPGTRTIIQKEPIDLRVKPTNSMIDRKPRLLFPTNSSSRLVALQGQSLILECIAEGFPTPTIKWLHPSDPMPTDRVIYQNHNKTLQLLNVGEEDDGEYTCLAENSLGSARHAYYVTVEAAPYWLQKPQSHLYGPGETARLDCQVQGRPQPEITWRINGMSMETVNKDQKYRIEQGSLILSNVQPTDTMVTQCEARNQHGLLLANAYIYVVQLPARILTKDNQTYMAVEGSTAYLLCKAFGAPVPSVQWLDEEGTTVLQDERFFPYANGTLSIRDLQANDTGRYFCQAANDQNNVTILANLQVKEATQITQGPRSAIEKKGARVTFTCQASFDPSLQASITWRGDGRDLQERGDSDKYFIEDGKLVIQSLDYSDQGNYSCVASTELDEVESRAQLLVVGSPGPVPHLELSDRHLLKQSQVHLSWSPAEDHNSPIEKYDIEFEDKEMAPEKWFSLGKVPGNQTSTTLKLSPYVHYTFRVTAINKYGPGEPSPVSESVVTPEAAPEKNPVDVRGEGNETNNMVITWKPLRWMDWNAPQIQYRVQWRPQGKQETWRKQTVSDPFLVVSNTSTFVPYEIKVQAVNNQGKGPEPQVTIGYSGEDYPQVSPELEDITIFNSSTVLVRWRPVDLAQVKGHLKGYNVTYWWKGSQRKHSKRHIHKSHIVVPANTTSAILSGLRPYSSYHVEVQAFNGRGLGPASEWTFSTPEGVPGHPEALHLECQSDTSLLLHWQPPLSHNGVLTGYLLSYHPVEGESKEQLFFNLSDPELRTHNLTNLNPDLQYRFQLQATTQQGGPGEAIVREGGTMALFGKPDFGNISATAGENYSVVSWVPRKGQCNFRFHILFKALPEGKVSPDHQPQPQYVSYNQSSYTQWNLQPDTKYEIHLIKEKVLLHHLDVKTNGTGPVRVSTTGSFASEGWFIAFVSAIILLLLILLILCFIKRSKGGKYSVKDKEDTQVDSEARPMKDETFGEYRSLESDNEEKAFGSSQPSLNGDIKPLGSDDSLADYGGSVDVQFNEDGSFIGQYSGKKEKEAAGGNDSSGATSPINPAVALE</sequence>
<dbReference type="EMBL" id="X12875">
    <property type="protein sequence ID" value="CAA31368.1"/>
    <property type="molecule type" value="mRNA"/>
</dbReference>
<dbReference type="PIR" id="S05479">
    <property type="entry name" value="S05479"/>
</dbReference>
<dbReference type="SMR" id="P11627"/>
<dbReference type="CORUM" id="P11627"/>
<dbReference type="FunCoup" id="P11627">
    <property type="interactions" value="446"/>
</dbReference>
<dbReference type="IntAct" id="P11627">
    <property type="interactions" value="7"/>
</dbReference>
<dbReference type="MINT" id="P11627"/>
<dbReference type="STRING" id="10090.ENSMUSP00000099935"/>
<dbReference type="GlyConnect" id="2537">
    <property type="glycosylation" value="40 N-Linked glycans (13 sites)"/>
</dbReference>
<dbReference type="GlyCosmos" id="P11627">
    <property type="glycosylation" value="21 sites, 39 glycans"/>
</dbReference>
<dbReference type="GlyGen" id="P11627">
    <property type="glycosylation" value="22 sites, 46 N-linked glycans (17 sites), 1 O-linked glycan (1 site)"/>
</dbReference>
<dbReference type="iPTMnet" id="P11627"/>
<dbReference type="PhosphoSitePlus" id="P11627"/>
<dbReference type="SwissPalm" id="P11627"/>
<dbReference type="PaxDb" id="10090-ENSMUSP00000099935"/>
<dbReference type="PeptideAtlas" id="P11627"/>
<dbReference type="ProteomicsDB" id="263478"/>
<dbReference type="ABCD" id="P11627">
    <property type="antibodies" value="8 sequenced antibodies"/>
</dbReference>
<dbReference type="AGR" id="MGI:96721"/>
<dbReference type="MGI" id="MGI:96721">
    <property type="gene designation" value="L1cam"/>
</dbReference>
<dbReference type="eggNOG" id="KOG3513">
    <property type="taxonomic scope" value="Eukaryota"/>
</dbReference>
<dbReference type="InParanoid" id="P11627"/>
<dbReference type="PhylomeDB" id="P11627"/>
<dbReference type="Reactome" id="R-MMU-210991">
    <property type="pathway name" value="Basigin interactions"/>
</dbReference>
<dbReference type="Reactome" id="R-MMU-373760">
    <property type="pathway name" value="L1CAM interactions"/>
</dbReference>
<dbReference type="Reactome" id="R-MMU-437239">
    <property type="pathway name" value="Recycling pathway of L1"/>
</dbReference>
<dbReference type="Reactome" id="R-MMU-445095">
    <property type="pathway name" value="Interaction between L1 and Ankyrins"/>
</dbReference>
<dbReference type="Reactome" id="R-MMU-445144">
    <property type="pathway name" value="Signal transduction by L1"/>
</dbReference>
<dbReference type="CD-CODE" id="CE726F99">
    <property type="entry name" value="Postsynaptic density"/>
</dbReference>
<dbReference type="ChiTaRS" id="L1cam">
    <property type="organism name" value="mouse"/>
</dbReference>
<dbReference type="PRO" id="PR:P11627"/>
<dbReference type="Proteomes" id="UP000000589">
    <property type="component" value="Unplaced"/>
</dbReference>
<dbReference type="RNAct" id="P11627">
    <property type="molecule type" value="protein"/>
</dbReference>
<dbReference type="GO" id="GO:0044295">
    <property type="term" value="C:axonal growth cone"/>
    <property type="evidence" value="ECO:0000250"/>
    <property type="project" value="UniProtKB"/>
</dbReference>
<dbReference type="GO" id="GO:0009986">
    <property type="term" value="C:cell surface"/>
    <property type="evidence" value="ECO:0000314"/>
    <property type="project" value="MGI"/>
</dbReference>
<dbReference type="GO" id="GO:0009897">
    <property type="term" value="C:external side of plasma membrane"/>
    <property type="evidence" value="ECO:0000314"/>
    <property type="project" value="MGI"/>
</dbReference>
<dbReference type="GO" id="GO:0098982">
    <property type="term" value="C:GABA-ergic synapse"/>
    <property type="evidence" value="ECO:0000314"/>
    <property type="project" value="SynGO"/>
</dbReference>
<dbReference type="GO" id="GO:0098978">
    <property type="term" value="C:glutamatergic synapse"/>
    <property type="evidence" value="ECO:0000314"/>
    <property type="project" value="SynGO"/>
</dbReference>
<dbReference type="GO" id="GO:0016020">
    <property type="term" value="C:membrane"/>
    <property type="evidence" value="ECO:0000314"/>
    <property type="project" value="MGI"/>
</dbReference>
<dbReference type="GO" id="GO:0043025">
    <property type="term" value="C:neuronal cell body"/>
    <property type="evidence" value="ECO:0000250"/>
    <property type="project" value="UniProtKB"/>
</dbReference>
<dbReference type="GO" id="GO:0005886">
    <property type="term" value="C:plasma membrane"/>
    <property type="evidence" value="ECO:0000314"/>
    <property type="project" value="MGI"/>
</dbReference>
<dbReference type="GO" id="GO:0042734">
    <property type="term" value="C:presynaptic membrane"/>
    <property type="evidence" value="ECO:0000314"/>
    <property type="project" value="MGI"/>
</dbReference>
<dbReference type="GO" id="GO:0098685">
    <property type="term" value="C:Schaffer collateral - CA1 synapse"/>
    <property type="evidence" value="ECO:0000314"/>
    <property type="project" value="SynGO"/>
</dbReference>
<dbReference type="GO" id="GO:0043195">
    <property type="term" value="C:terminal bouton"/>
    <property type="evidence" value="ECO:0000314"/>
    <property type="project" value="MGI"/>
</dbReference>
<dbReference type="GO" id="GO:0042802">
    <property type="term" value="F:identical protein binding"/>
    <property type="evidence" value="ECO:0000314"/>
    <property type="project" value="MGI"/>
</dbReference>
<dbReference type="GO" id="GO:0005178">
    <property type="term" value="F:integrin binding"/>
    <property type="evidence" value="ECO:0000314"/>
    <property type="project" value="MGI"/>
</dbReference>
<dbReference type="GO" id="GO:0033691">
    <property type="term" value="F:sialic acid binding"/>
    <property type="evidence" value="ECO:0000314"/>
    <property type="project" value="MGI"/>
</dbReference>
<dbReference type="GO" id="GO:0007411">
    <property type="term" value="P:axon guidance"/>
    <property type="evidence" value="ECO:0000314"/>
    <property type="project" value="MGI"/>
</dbReference>
<dbReference type="GO" id="GO:0019722">
    <property type="term" value="P:calcium-mediated signaling"/>
    <property type="evidence" value="ECO:0000314"/>
    <property type="project" value="MGI"/>
</dbReference>
<dbReference type="GO" id="GO:0016477">
    <property type="term" value="P:cell migration"/>
    <property type="evidence" value="ECO:0000250"/>
    <property type="project" value="UniProtKB"/>
</dbReference>
<dbReference type="GO" id="GO:0007166">
    <property type="term" value="P:cell surface receptor signaling pathway"/>
    <property type="evidence" value="ECO:0000314"/>
    <property type="project" value="MGI"/>
</dbReference>
<dbReference type="GO" id="GO:0033631">
    <property type="term" value="P:cell-cell adhesion mediated by integrin"/>
    <property type="evidence" value="ECO:0000315"/>
    <property type="project" value="MGI"/>
</dbReference>
<dbReference type="GO" id="GO:0007160">
    <property type="term" value="P:cell-matrix adhesion"/>
    <property type="evidence" value="ECO:0000250"/>
    <property type="project" value="UniProtKB"/>
</dbReference>
<dbReference type="GO" id="GO:0007157">
    <property type="term" value="P:heterophilic cell-cell adhesion via plasma membrane cell adhesion molecules"/>
    <property type="evidence" value="ECO:0000315"/>
    <property type="project" value="MGI"/>
</dbReference>
<dbReference type="GO" id="GO:0007156">
    <property type="term" value="P:homophilic cell adhesion via plasma membrane adhesion molecules"/>
    <property type="evidence" value="ECO:0000315"/>
    <property type="project" value="MGI"/>
</dbReference>
<dbReference type="GO" id="GO:0034109">
    <property type="term" value="P:homotypic cell-cell adhesion"/>
    <property type="evidence" value="ECO:0000315"/>
    <property type="project" value="MGI"/>
</dbReference>
<dbReference type="GO" id="GO:0007159">
    <property type="term" value="P:leukocyte cell-cell adhesion"/>
    <property type="evidence" value="ECO:0000315"/>
    <property type="project" value="MGI"/>
</dbReference>
<dbReference type="GO" id="GO:0099558">
    <property type="term" value="P:maintenance of synapse structure"/>
    <property type="evidence" value="ECO:0000314"/>
    <property type="project" value="SynGO"/>
</dbReference>
<dbReference type="GO" id="GO:0031175">
    <property type="term" value="P:neuron projection development"/>
    <property type="evidence" value="ECO:0000314"/>
    <property type="project" value="MGI"/>
</dbReference>
<dbReference type="GO" id="GO:0045773">
    <property type="term" value="P:positive regulation of axon extension"/>
    <property type="evidence" value="ECO:0000250"/>
    <property type="project" value="UniProtKB"/>
</dbReference>
<dbReference type="GO" id="GO:0050850">
    <property type="term" value="P:positive regulation of calcium-mediated signaling"/>
    <property type="evidence" value="ECO:0000314"/>
    <property type="project" value="MGI"/>
</dbReference>
<dbReference type="GO" id="GO:0022409">
    <property type="term" value="P:positive regulation of cell-cell adhesion"/>
    <property type="evidence" value="ECO:0000315"/>
    <property type="project" value="MGI"/>
</dbReference>
<dbReference type="GO" id="GO:0051963">
    <property type="term" value="P:regulation of synapse assembly"/>
    <property type="evidence" value="ECO:0000314"/>
    <property type="project" value="SynGO"/>
</dbReference>
<dbReference type="GO" id="GO:0050808">
    <property type="term" value="P:synapse organization"/>
    <property type="evidence" value="ECO:0000250"/>
    <property type="project" value="UniProtKB"/>
</dbReference>
<dbReference type="CDD" id="cd00063">
    <property type="entry name" value="FN3"/>
    <property type="match status" value="4"/>
</dbReference>
<dbReference type="CDD" id="cd05876">
    <property type="entry name" value="Ig3_L1-CAM"/>
    <property type="match status" value="1"/>
</dbReference>
<dbReference type="CDD" id="cd05733">
    <property type="entry name" value="IgI_L1-CAM_like"/>
    <property type="match status" value="1"/>
</dbReference>
<dbReference type="FunFam" id="2.60.40.10:FF:000561">
    <property type="entry name" value="Neural cell adhesion molecule L1"/>
    <property type="match status" value="1"/>
</dbReference>
<dbReference type="FunFam" id="2.60.40.10:FF:000658">
    <property type="entry name" value="Neural cell adhesion molecule L1"/>
    <property type="match status" value="1"/>
</dbReference>
<dbReference type="FunFam" id="2.60.40.10:FF:000713">
    <property type="entry name" value="Neural cell adhesion molecule L1"/>
    <property type="match status" value="1"/>
</dbReference>
<dbReference type="FunFam" id="2.60.40.10:FF:000945">
    <property type="entry name" value="Neural cell adhesion molecule L1"/>
    <property type="match status" value="1"/>
</dbReference>
<dbReference type="FunFam" id="2.60.40.10:FF:000057">
    <property type="entry name" value="neural cell adhesion molecule L1"/>
    <property type="match status" value="1"/>
</dbReference>
<dbReference type="FunFam" id="2.60.40.10:FF:000063">
    <property type="entry name" value="neural cell adhesion molecule L1"/>
    <property type="match status" value="1"/>
</dbReference>
<dbReference type="FunFam" id="2.60.40.10:FF:000005">
    <property type="entry name" value="Neuronal cell adhesion molecule"/>
    <property type="match status" value="1"/>
</dbReference>
<dbReference type="FunFam" id="2.60.40.10:FF:000028">
    <property type="entry name" value="Neuronal cell adhesion molecule"/>
    <property type="match status" value="1"/>
</dbReference>
<dbReference type="FunFam" id="2.60.40.10:FF:000038">
    <property type="entry name" value="Neuronal cell adhesion molecule"/>
    <property type="match status" value="1"/>
</dbReference>
<dbReference type="FunFam" id="2.60.40.10:FF:000100">
    <property type="entry name" value="Neuronal cell adhesion molecule a"/>
    <property type="match status" value="1"/>
</dbReference>
<dbReference type="Gene3D" id="2.60.40.10">
    <property type="entry name" value="Immunoglobulins"/>
    <property type="match status" value="10"/>
</dbReference>
<dbReference type="InterPro" id="IPR003961">
    <property type="entry name" value="FN3_dom"/>
</dbReference>
<dbReference type="InterPro" id="IPR036116">
    <property type="entry name" value="FN3_sf"/>
</dbReference>
<dbReference type="InterPro" id="IPR007110">
    <property type="entry name" value="Ig-like_dom"/>
</dbReference>
<dbReference type="InterPro" id="IPR036179">
    <property type="entry name" value="Ig-like_dom_sf"/>
</dbReference>
<dbReference type="InterPro" id="IPR013783">
    <property type="entry name" value="Ig-like_fold"/>
</dbReference>
<dbReference type="InterPro" id="IPR013098">
    <property type="entry name" value="Ig_I-set"/>
</dbReference>
<dbReference type="InterPro" id="IPR003599">
    <property type="entry name" value="Ig_sub"/>
</dbReference>
<dbReference type="InterPro" id="IPR003598">
    <property type="entry name" value="Ig_sub2"/>
</dbReference>
<dbReference type="InterPro" id="IPR051170">
    <property type="entry name" value="Neural/epithelial_adhesion"/>
</dbReference>
<dbReference type="InterPro" id="IPR026966">
    <property type="entry name" value="Neurofascin/L1/NrCAM_C"/>
</dbReference>
<dbReference type="PANTHER" id="PTHR12231">
    <property type="entry name" value="CTX-RELATED TYPE I TRANSMEMBRANE PROTEIN"/>
    <property type="match status" value="1"/>
</dbReference>
<dbReference type="PANTHER" id="PTHR12231:SF241">
    <property type="entry name" value="L1 CELL ADHESION MOLECULE"/>
    <property type="match status" value="1"/>
</dbReference>
<dbReference type="Pfam" id="PF13882">
    <property type="entry name" value="Bravo_FIGEY"/>
    <property type="match status" value="1"/>
</dbReference>
<dbReference type="Pfam" id="PF00041">
    <property type="entry name" value="fn3"/>
    <property type="match status" value="4"/>
</dbReference>
<dbReference type="Pfam" id="PF07679">
    <property type="entry name" value="I-set"/>
    <property type="match status" value="4"/>
</dbReference>
<dbReference type="Pfam" id="PF13927">
    <property type="entry name" value="Ig_3"/>
    <property type="match status" value="1"/>
</dbReference>
<dbReference type="SMART" id="SM00060">
    <property type="entry name" value="FN3"/>
    <property type="match status" value="4"/>
</dbReference>
<dbReference type="SMART" id="SM00409">
    <property type="entry name" value="IG"/>
    <property type="match status" value="6"/>
</dbReference>
<dbReference type="SMART" id="SM00408">
    <property type="entry name" value="IGc2"/>
    <property type="match status" value="5"/>
</dbReference>
<dbReference type="SUPFAM" id="SSF49265">
    <property type="entry name" value="Fibronectin type III"/>
    <property type="match status" value="3"/>
</dbReference>
<dbReference type="SUPFAM" id="SSF48726">
    <property type="entry name" value="Immunoglobulin"/>
    <property type="match status" value="6"/>
</dbReference>
<dbReference type="PROSITE" id="PS50853">
    <property type="entry name" value="FN3"/>
    <property type="match status" value="4"/>
</dbReference>
<dbReference type="PROSITE" id="PS50835">
    <property type="entry name" value="IG_LIKE"/>
    <property type="match status" value="6"/>
</dbReference>
<organism>
    <name type="scientific">Mus musculus</name>
    <name type="common">Mouse</name>
    <dbReference type="NCBI Taxonomy" id="10090"/>
    <lineage>
        <taxon>Eukaryota</taxon>
        <taxon>Metazoa</taxon>
        <taxon>Chordata</taxon>
        <taxon>Craniata</taxon>
        <taxon>Vertebrata</taxon>
        <taxon>Euteleostomi</taxon>
        <taxon>Mammalia</taxon>
        <taxon>Eutheria</taxon>
        <taxon>Euarchontoglires</taxon>
        <taxon>Glires</taxon>
        <taxon>Rodentia</taxon>
        <taxon>Myomorpha</taxon>
        <taxon>Muroidea</taxon>
        <taxon>Muridae</taxon>
        <taxon>Murinae</taxon>
        <taxon>Mus</taxon>
        <taxon>Mus</taxon>
    </lineage>
</organism>
<feature type="signal peptide">
    <location>
        <begin position="1"/>
        <end position="19"/>
    </location>
</feature>
<feature type="chain" id="PRO_0000015023" description="Neural cell adhesion molecule L1">
    <location>
        <begin position="20"/>
        <end position="1260"/>
    </location>
</feature>
<feature type="topological domain" description="Extracellular" evidence="3">
    <location>
        <begin position="20"/>
        <end position="1123"/>
    </location>
</feature>
<feature type="transmembrane region" description="Helical" evidence="3">
    <location>
        <begin position="1124"/>
        <end position="1146"/>
    </location>
</feature>
<feature type="topological domain" description="Cytoplasmic" evidence="3">
    <location>
        <begin position="1147"/>
        <end position="1260"/>
    </location>
</feature>
<feature type="domain" description="Ig-like C2-type 1">
    <location>
        <begin position="35"/>
        <end position="130"/>
    </location>
</feature>
<feature type="domain" description="Ig-like C2-type 2">
    <location>
        <begin position="138"/>
        <end position="225"/>
    </location>
</feature>
<feature type="domain" description="Ig-like C2-type 3">
    <location>
        <begin position="239"/>
        <end position="327"/>
    </location>
</feature>
<feature type="domain" description="Ig-like C2-type 4">
    <location>
        <begin position="332"/>
        <end position="419"/>
    </location>
</feature>
<feature type="domain" description="Ig-like C2-type 5">
    <location>
        <begin position="424"/>
        <end position="506"/>
    </location>
</feature>
<feature type="domain" description="Ig-like C2-type 6">
    <location>
        <begin position="517"/>
        <end position="600"/>
    </location>
</feature>
<feature type="domain" description="Fibronectin type-III 1" evidence="5">
    <location>
        <begin position="613"/>
        <end position="711"/>
    </location>
</feature>
<feature type="domain" description="Fibronectin type-III 2" evidence="5">
    <location>
        <begin position="716"/>
        <end position="809"/>
    </location>
</feature>
<feature type="domain" description="Fibronectin type-III 3" evidence="5">
    <location>
        <begin position="811"/>
        <end position="916"/>
    </location>
</feature>
<feature type="domain" description="Fibronectin type-III 4" evidence="5">
    <location>
        <begin position="919"/>
        <end position="1015"/>
    </location>
</feature>
<feature type="domain" description="Fibronectin type-III 5" evidence="5">
    <location>
        <begin position="1014"/>
        <end position="1112"/>
    </location>
</feature>
<feature type="region of interest" description="Disordered" evidence="6">
    <location>
        <begin position="697"/>
        <end position="724"/>
    </location>
</feature>
<feature type="region of interest" description="Disordered" evidence="6">
    <location>
        <begin position="1183"/>
        <end position="1210"/>
    </location>
</feature>
<feature type="region of interest" description="Disordered" evidence="6">
    <location>
        <begin position="1229"/>
        <end position="1260"/>
    </location>
</feature>
<feature type="short sequence motif" description="Cell attachment site" evidence="3">
    <location>
        <begin position="553"/>
        <end position="555"/>
    </location>
</feature>
<feature type="short sequence motif" description="Cell attachment site" evidence="3">
    <location>
        <begin position="562"/>
        <end position="564"/>
    </location>
</feature>
<feature type="compositionally biased region" description="Basic and acidic residues" evidence="6">
    <location>
        <begin position="712"/>
        <end position="724"/>
    </location>
</feature>
<feature type="compositionally biased region" description="Polar residues" evidence="6">
    <location>
        <begin position="1244"/>
        <end position="1253"/>
    </location>
</feature>
<feature type="modified residue" description="Phosphoserine" evidence="1">
    <location>
        <position position="1166"/>
    </location>
</feature>
<feature type="modified residue" description="Phosphoserine" evidence="11">
    <location>
        <position position="1181"/>
    </location>
</feature>
<feature type="modified residue" description="Phosphoserine" evidence="11">
    <location>
        <position position="1184"/>
    </location>
</feature>
<feature type="modified residue" description="Phosphoserine" evidence="1">
    <location>
        <position position="1197"/>
    </location>
</feature>
<feature type="modified residue" description="Phosphoserine" evidence="11">
    <location>
        <position position="1246"/>
    </location>
</feature>
<feature type="modified residue" description="Phosphoserine" evidence="11">
    <location>
        <position position="1247"/>
    </location>
</feature>
<feature type="modified residue" description="Phosphoserine" evidence="11">
    <location>
        <position position="1251"/>
    </location>
</feature>
<feature type="glycosylation site" description="N-linked (GlcNAc...) asparagine" evidence="3">
    <location>
        <position position="100"/>
    </location>
</feature>
<feature type="glycosylation site" description="N-linked (GlcNAc...) asparagine" evidence="3">
    <location>
        <position position="202"/>
    </location>
</feature>
<feature type="glycosylation site" description="N-linked (GlcNAc...) asparagine" evidence="3">
    <location>
        <position position="246"/>
    </location>
</feature>
<feature type="glycosylation site" description="N-linked (GlcNAc...) asparagine" evidence="3">
    <location>
        <position position="293"/>
    </location>
</feature>
<feature type="glycosylation site" description="N-linked (GlcNAc...) asparagine" evidence="3">
    <location>
        <position position="432"/>
    </location>
</feature>
<feature type="glycosylation site" description="N-linked (GlcNAc...) asparagine" evidence="3">
    <location>
        <position position="478"/>
    </location>
</feature>
<feature type="glycosylation site" description="N-linked (GlcNAc...) asparagine" evidence="3">
    <location>
        <position position="489"/>
    </location>
</feature>
<feature type="glycosylation site" description="N-linked (GlcNAc...) asparagine" evidence="3">
    <location>
        <position position="504"/>
    </location>
</feature>
<feature type="glycosylation site" description="N-linked (GlcNAc...) asparagine" evidence="3">
    <location>
        <position position="587"/>
    </location>
</feature>
<feature type="glycosylation site" description="N-linked (GlcNAc...) asparagine" evidence="9">
    <location>
        <position position="670"/>
    </location>
</feature>
<feature type="glycosylation site" description="N-linked (GlcNAc...) asparagine" evidence="9">
    <location>
        <position position="725"/>
    </location>
</feature>
<feature type="glycosylation site" description="N-linked (GlcNAc...) asparagine" evidence="3">
    <location>
        <position position="776"/>
    </location>
</feature>
<feature type="glycosylation site" description="N-linked (GlcNAc...) asparagine" evidence="3">
    <location>
        <position position="824"/>
    </location>
</feature>
<feature type="glycosylation site" description="N-linked (GlcNAc...) asparagine" evidence="3">
    <location>
        <position position="848"/>
    </location>
</feature>
<feature type="glycosylation site" description="N-linked (GlcNAc...) asparagine" evidence="3">
    <location>
        <position position="875"/>
    </location>
</feature>
<feature type="glycosylation site" description="N-linked (GlcNAc...) asparagine" evidence="9">
    <location>
        <position position="968"/>
    </location>
</feature>
<feature type="glycosylation site" description="N-linked (GlcNAc...) asparagine" evidence="9">
    <location>
        <position position="978"/>
    </location>
</feature>
<feature type="glycosylation site" description="N-linked (GlcNAc...) asparagine" evidence="3">
    <location>
        <position position="1022"/>
    </location>
</feature>
<feature type="glycosylation site" description="N-linked (GlcNAc...) asparagine" evidence="3">
    <location>
        <position position="1030"/>
    </location>
</feature>
<feature type="glycosylation site" description="N-linked (GlcNAc...) asparagine" evidence="3">
    <location>
        <position position="1073"/>
    </location>
</feature>
<feature type="glycosylation site" description="N-linked (GlcNAc...) asparagine" evidence="3">
    <location>
        <position position="1107"/>
    </location>
</feature>
<feature type="disulfide bond" evidence="4">
    <location>
        <begin position="57"/>
        <end position="113"/>
    </location>
</feature>
<feature type="disulfide bond" evidence="4">
    <location>
        <begin position="157"/>
        <end position="208"/>
    </location>
</feature>
<feature type="disulfide bond" evidence="4">
    <location>
        <begin position="263"/>
        <end position="311"/>
    </location>
</feature>
<feature type="disulfide bond" evidence="4">
    <location>
        <begin position="353"/>
        <end position="403"/>
    </location>
</feature>
<feature type="disulfide bond" evidence="4">
    <location>
        <begin position="447"/>
        <end position="496"/>
    </location>
</feature>
<feature type="disulfide bond" evidence="4">
    <location>
        <begin position="538"/>
        <end position="590"/>
    </location>
</feature>
<proteinExistence type="evidence at protein level"/>
<gene>
    <name type="primary">L1cam</name>
    <name type="synonym">Caml1</name>
</gene>
<name>L1CAM_MOUSE</name>
<protein>
    <recommendedName>
        <fullName>Neural cell adhesion molecule L1</fullName>
        <shortName>N-CAM-L1</shortName>
        <shortName>NCAM-L1</shortName>
    </recommendedName>
    <cdAntigenName>CD171</cdAntigenName>
</protein>
<reference key="1">
    <citation type="journal article" date="1988" name="Nature">
        <title>Neural adhesion molecule L1 as a member of the immunoglobulin superfamily with binding domains similar to fibronectin.</title>
        <authorList>
            <person name="Moos M."/>
            <person name="Tacke R."/>
            <person name="Scherer H."/>
            <person name="Teplow D."/>
            <person name="Frueh K."/>
            <person name="Schachner M."/>
        </authorList>
    </citation>
    <scope>NUCLEOTIDE SEQUENCE [MRNA]</scope>
    <scope>PARTIAL PROTEIN SEQUENCE</scope>
    <source>
        <tissue>Brain</tissue>
    </source>
</reference>
<reference key="2">
    <citation type="submission" date="2007-04" db="UniProtKB">
        <authorList>
            <person name="Lubec G."/>
            <person name="Kang S.U."/>
        </authorList>
    </citation>
    <scope>PROTEIN SEQUENCE OF 45-56; 449-472 AND 515-524</scope>
    <scope>IDENTIFICATION BY MASS SPECTROMETRY</scope>
    <source>
        <strain>C57BL/6J</strain>
        <tissue>Brain</tissue>
    </source>
</reference>
<reference key="3">
    <citation type="journal article" date="2003" name="J. Neurochem.">
        <title>The immunoglobulin-superfamily molecule basigin is a binding protein for oligomannosidic carbohydrates: an anti-idiotypic approach.</title>
        <authorList>
            <person name="Heller M."/>
            <person name="von der Ohe M."/>
            <person name="Kleene R."/>
            <person name="Mohajeri M.H."/>
            <person name="Schachner M."/>
        </authorList>
    </citation>
    <scope>INTERACTION WITH BSG</scope>
</reference>
<reference key="4">
    <citation type="journal article" date="2003" name="J. Neurosci.">
        <title>The C264Y missense mutation in the extracellular domain of L1 impairs protein trafficking in vitro and in vivo.</title>
        <authorList>
            <person name="Ruenker A.E."/>
            <person name="Bartsch U."/>
            <person name="Nave K.A."/>
            <person name="Schachner M."/>
        </authorList>
    </citation>
    <scope>TISSUE SPECIFICITY</scope>
</reference>
<reference key="5">
    <citation type="journal article" date="2009" name="Nat. Biotechnol.">
        <title>Mass-spectrometric identification and relative quantification of N-linked cell surface glycoproteins.</title>
        <authorList>
            <person name="Wollscheid B."/>
            <person name="Bausch-Fluck D."/>
            <person name="Henderson C."/>
            <person name="O'Brien R."/>
            <person name="Bibel M."/>
            <person name="Schiess R."/>
            <person name="Aebersold R."/>
            <person name="Watts J.D."/>
        </authorList>
    </citation>
    <scope>GLYCOSYLATION [LARGE SCALE ANALYSIS] AT ASN-670; ASN-725; ASN-968 AND ASN-978</scope>
</reference>
<reference key="6">
    <citation type="journal article" date="2010" name="Cell">
        <title>A tissue-specific atlas of mouse protein phosphorylation and expression.</title>
        <authorList>
            <person name="Huttlin E.L."/>
            <person name="Jedrychowski M.P."/>
            <person name="Elias J.E."/>
            <person name="Goswami T."/>
            <person name="Rad R."/>
            <person name="Beausoleil S.A."/>
            <person name="Villen J."/>
            <person name="Haas W."/>
            <person name="Sowa M.E."/>
            <person name="Gygi S.P."/>
        </authorList>
    </citation>
    <scope>PHOSPHORYLATION [LARGE SCALE ANALYSIS] AT SER-1181; SER-1184; SER-1246; SER-1247 AND SER-1251</scope>
    <scope>IDENTIFICATION BY MASS SPECTROMETRY [LARGE SCALE ANALYSIS]</scope>
    <source>
        <tissue>Brain</tissue>
        <tissue>Kidney</tissue>
    </source>
</reference>
<keyword id="KW-0130">Cell adhesion</keyword>
<keyword id="KW-1003">Cell membrane</keyword>
<keyword id="KW-0966">Cell projection</keyword>
<keyword id="KW-0217">Developmental protein</keyword>
<keyword id="KW-0221">Differentiation</keyword>
<keyword id="KW-0903">Direct protein sequencing</keyword>
<keyword id="KW-1015">Disulfide bond</keyword>
<keyword id="KW-0325">Glycoprotein</keyword>
<keyword id="KW-0393">Immunoglobulin domain</keyword>
<keyword id="KW-0472">Membrane</keyword>
<keyword id="KW-0524">Neurogenesis</keyword>
<keyword id="KW-0597">Phosphoprotein</keyword>
<keyword id="KW-1185">Reference proteome</keyword>
<keyword id="KW-0677">Repeat</keyword>
<keyword id="KW-0732">Signal</keyword>
<keyword id="KW-0812">Transmembrane</keyword>
<keyword id="KW-1133">Transmembrane helix</keyword>
<accession>P11627</accession>
<comment type="function">
    <text evidence="1">Neural cell adhesion molecule involved in the dynamics of cell adhesion and in the generation of transmembrane signals at tyrosine kinase receptors. During brain development, critical in multiple processes, including neuronal migration, axonal growth and fasciculation, and synaptogenesis. In the mature brain, plays a role in the dynamics of neuronal structure and function, including synaptic plasticity.</text>
</comment>
<comment type="subunit">
    <text evidence="2 8">Interacts with SHTN1; the interaction occurs in axonal growth cones (By similarity). Interacts with isoform 2 of BSG (PubMed:12558975).</text>
</comment>
<comment type="interaction">
    <interactant intactId="EBI-397964">
        <id>P11627</id>
    </interactant>
    <interactant intactId="EBI-77070">
        <id>P34152</id>
        <label>Ptk2</label>
    </interactant>
    <organismsDiffer>false</organismsDiffer>
    <experiments>4</experiments>
</comment>
<comment type="interaction">
    <interactant intactId="EBI-397964">
        <id>P11627</id>
    </interactant>
    <interactant intactId="EBI-983394">
        <id>Q8VI36</id>
        <label>Pxn</label>
    </interactant>
    <organismsDiffer>false</organismsDiffer>
    <experiments>2</experiments>
</comment>
<comment type="subcellular location">
    <subcellularLocation>
        <location evidence="2">Cell membrane</location>
        <topology evidence="2">Single-pass type I membrane protein</topology>
    </subcellularLocation>
    <subcellularLocation>
        <location evidence="2">Cell projection</location>
        <location evidence="2">Growth cone</location>
    </subcellularLocation>
    <text evidence="2">Colocalized with SHTN1 in close apposition with actin filaments in filopodia and lamellipodia of axonalne growth cones of hippocampal neurons.</text>
</comment>
<comment type="tissue specificity">
    <text evidence="7">Expressed in the brain, including in the molecular layer of the cerebellar cortex, the fiber-rich layers of the hippocampus (alveus, and strata lacunosum moleculare, radiatum, and oriens), the nerve fiber layer and the inner and outer plexiform layers of the retina, and in the molecular layer of the olfactory bulb (at protein level).</text>
</comment>
<comment type="similarity">
    <text evidence="10">Belongs to the immunoglobulin superfamily. L1/neurofascin/NgCAM family.</text>
</comment>
<comment type="online information" name="Functional Glycomics Gateway - Glycan Binding">
    <link uri="http://www.functionalglycomics.org/glycomics/GBPServlet?&amp;operationType=view&amp;cbpId=cbp_mou_Itlect_190"/>
    <text>N-CAM 140</text>
</comment>